<accession>B3EE57</accession>
<dbReference type="EC" id="1.1.1.267" evidence="1"/>
<dbReference type="EMBL" id="CP001097">
    <property type="protein sequence ID" value="ACD89191.1"/>
    <property type="molecule type" value="Genomic_DNA"/>
</dbReference>
<dbReference type="RefSeq" id="WP_012465072.1">
    <property type="nucleotide sequence ID" value="NC_010803.1"/>
</dbReference>
<dbReference type="SMR" id="B3EE57"/>
<dbReference type="STRING" id="290315.Clim_0085"/>
<dbReference type="KEGG" id="cli:Clim_0085"/>
<dbReference type="eggNOG" id="COG0743">
    <property type="taxonomic scope" value="Bacteria"/>
</dbReference>
<dbReference type="HOGENOM" id="CLU_035714_4_0_10"/>
<dbReference type="OrthoDB" id="9806546at2"/>
<dbReference type="UniPathway" id="UPA00056">
    <property type="reaction ID" value="UER00092"/>
</dbReference>
<dbReference type="Proteomes" id="UP000008841">
    <property type="component" value="Chromosome"/>
</dbReference>
<dbReference type="GO" id="GO:0030604">
    <property type="term" value="F:1-deoxy-D-xylulose-5-phosphate reductoisomerase activity"/>
    <property type="evidence" value="ECO:0007669"/>
    <property type="project" value="UniProtKB-UniRule"/>
</dbReference>
<dbReference type="GO" id="GO:0030145">
    <property type="term" value="F:manganese ion binding"/>
    <property type="evidence" value="ECO:0007669"/>
    <property type="project" value="TreeGrafter"/>
</dbReference>
<dbReference type="GO" id="GO:0070402">
    <property type="term" value="F:NADPH binding"/>
    <property type="evidence" value="ECO:0007669"/>
    <property type="project" value="InterPro"/>
</dbReference>
<dbReference type="GO" id="GO:0051484">
    <property type="term" value="P:isopentenyl diphosphate biosynthetic process, methylerythritol 4-phosphate pathway involved in terpenoid biosynthetic process"/>
    <property type="evidence" value="ECO:0007669"/>
    <property type="project" value="TreeGrafter"/>
</dbReference>
<dbReference type="FunFam" id="1.10.1740.10:FF:000004">
    <property type="entry name" value="1-deoxy-D-xylulose 5-phosphate reductoisomerase"/>
    <property type="match status" value="1"/>
</dbReference>
<dbReference type="FunFam" id="3.40.50.720:FF:000045">
    <property type="entry name" value="1-deoxy-D-xylulose 5-phosphate reductoisomerase"/>
    <property type="match status" value="1"/>
</dbReference>
<dbReference type="Gene3D" id="1.10.1740.10">
    <property type="match status" value="1"/>
</dbReference>
<dbReference type="Gene3D" id="3.40.50.720">
    <property type="entry name" value="NAD(P)-binding Rossmann-like Domain"/>
    <property type="match status" value="1"/>
</dbReference>
<dbReference type="HAMAP" id="MF_00183">
    <property type="entry name" value="DXP_reductoisom"/>
    <property type="match status" value="1"/>
</dbReference>
<dbReference type="InterPro" id="IPR003821">
    <property type="entry name" value="DXP_reductoisomerase"/>
</dbReference>
<dbReference type="InterPro" id="IPR013644">
    <property type="entry name" value="DXP_reductoisomerase_C"/>
</dbReference>
<dbReference type="InterPro" id="IPR013512">
    <property type="entry name" value="DXP_reductoisomerase_N"/>
</dbReference>
<dbReference type="InterPro" id="IPR026877">
    <property type="entry name" value="DXPR_C"/>
</dbReference>
<dbReference type="InterPro" id="IPR036169">
    <property type="entry name" value="DXPR_C_sf"/>
</dbReference>
<dbReference type="InterPro" id="IPR036291">
    <property type="entry name" value="NAD(P)-bd_dom_sf"/>
</dbReference>
<dbReference type="NCBIfam" id="TIGR00243">
    <property type="entry name" value="Dxr"/>
    <property type="match status" value="1"/>
</dbReference>
<dbReference type="NCBIfam" id="NF009114">
    <property type="entry name" value="PRK12464.1"/>
    <property type="match status" value="1"/>
</dbReference>
<dbReference type="PANTHER" id="PTHR30525">
    <property type="entry name" value="1-DEOXY-D-XYLULOSE 5-PHOSPHATE REDUCTOISOMERASE"/>
    <property type="match status" value="1"/>
</dbReference>
<dbReference type="PANTHER" id="PTHR30525:SF0">
    <property type="entry name" value="1-DEOXY-D-XYLULOSE 5-PHOSPHATE REDUCTOISOMERASE, CHLOROPLASTIC"/>
    <property type="match status" value="1"/>
</dbReference>
<dbReference type="Pfam" id="PF08436">
    <property type="entry name" value="DXP_redisom_C"/>
    <property type="match status" value="1"/>
</dbReference>
<dbReference type="Pfam" id="PF02670">
    <property type="entry name" value="DXP_reductoisom"/>
    <property type="match status" value="1"/>
</dbReference>
<dbReference type="Pfam" id="PF13288">
    <property type="entry name" value="DXPR_C"/>
    <property type="match status" value="1"/>
</dbReference>
<dbReference type="PIRSF" id="PIRSF006205">
    <property type="entry name" value="Dxp_reductismrs"/>
    <property type="match status" value="1"/>
</dbReference>
<dbReference type="SUPFAM" id="SSF69055">
    <property type="entry name" value="1-deoxy-D-xylulose-5-phosphate reductoisomerase, C-terminal domain"/>
    <property type="match status" value="1"/>
</dbReference>
<dbReference type="SUPFAM" id="SSF55347">
    <property type="entry name" value="Glyceraldehyde-3-phosphate dehydrogenase-like, C-terminal domain"/>
    <property type="match status" value="1"/>
</dbReference>
<dbReference type="SUPFAM" id="SSF51735">
    <property type="entry name" value="NAD(P)-binding Rossmann-fold domains"/>
    <property type="match status" value="1"/>
</dbReference>
<organism>
    <name type="scientific">Chlorobium limicola (strain DSM 245 / NBRC 103803 / 6330)</name>
    <dbReference type="NCBI Taxonomy" id="290315"/>
    <lineage>
        <taxon>Bacteria</taxon>
        <taxon>Pseudomonadati</taxon>
        <taxon>Chlorobiota</taxon>
        <taxon>Chlorobiia</taxon>
        <taxon>Chlorobiales</taxon>
        <taxon>Chlorobiaceae</taxon>
        <taxon>Chlorobium/Pelodictyon group</taxon>
        <taxon>Chlorobium</taxon>
    </lineage>
</organism>
<feature type="chain" id="PRO_1000098482" description="1-deoxy-D-xylulose 5-phosphate reductoisomerase">
    <location>
        <begin position="1"/>
        <end position="382"/>
    </location>
</feature>
<feature type="binding site" evidence="1">
    <location>
        <position position="10"/>
    </location>
    <ligand>
        <name>NADPH</name>
        <dbReference type="ChEBI" id="CHEBI:57783"/>
    </ligand>
</feature>
<feature type="binding site" evidence="1">
    <location>
        <position position="11"/>
    </location>
    <ligand>
        <name>NADPH</name>
        <dbReference type="ChEBI" id="CHEBI:57783"/>
    </ligand>
</feature>
<feature type="binding site" evidence="1">
    <location>
        <position position="12"/>
    </location>
    <ligand>
        <name>NADPH</name>
        <dbReference type="ChEBI" id="CHEBI:57783"/>
    </ligand>
</feature>
<feature type="binding site" evidence="1">
    <location>
        <position position="13"/>
    </location>
    <ligand>
        <name>NADPH</name>
        <dbReference type="ChEBI" id="CHEBI:57783"/>
    </ligand>
</feature>
<feature type="binding site" evidence="1">
    <location>
        <position position="36"/>
    </location>
    <ligand>
        <name>NADPH</name>
        <dbReference type="ChEBI" id="CHEBI:57783"/>
    </ligand>
</feature>
<feature type="binding site" evidence="1">
    <location>
        <position position="122"/>
    </location>
    <ligand>
        <name>NADPH</name>
        <dbReference type="ChEBI" id="CHEBI:57783"/>
    </ligand>
</feature>
<feature type="binding site" evidence="1">
    <location>
        <position position="123"/>
    </location>
    <ligand>
        <name>1-deoxy-D-xylulose 5-phosphate</name>
        <dbReference type="ChEBI" id="CHEBI:57792"/>
    </ligand>
</feature>
<feature type="binding site" evidence="1">
    <location>
        <position position="124"/>
    </location>
    <ligand>
        <name>NADPH</name>
        <dbReference type="ChEBI" id="CHEBI:57783"/>
    </ligand>
</feature>
<feature type="binding site" evidence="1">
    <location>
        <position position="148"/>
    </location>
    <ligand>
        <name>Mn(2+)</name>
        <dbReference type="ChEBI" id="CHEBI:29035"/>
    </ligand>
</feature>
<feature type="binding site" evidence="1">
    <location>
        <position position="149"/>
    </location>
    <ligand>
        <name>1-deoxy-D-xylulose 5-phosphate</name>
        <dbReference type="ChEBI" id="CHEBI:57792"/>
    </ligand>
</feature>
<feature type="binding site" evidence="1">
    <location>
        <position position="150"/>
    </location>
    <ligand>
        <name>1-deoxy-D-xylulose 5-phosphate</name>
        <dbReference type="ChEBI" id="CHEBI:57792"/>
    </ligand>
</feature>
<feature type="binding site" evidence="1">
    <location>
        <position position="150"/>
    </location>
    <ligand>
        <name>Mn(2+)</name>
        <dbReference type="ChEBI" id="CHEBI:29035"/>
    </ligand>
</feature>
<feature type="binding site" evidence="1">
    <location>
        <position position="174"/>
    </location>
    <ligand>
        <name>1-deoxy-D-xylulose 5-phosphate</name>
        <dbReference type="ChEBI" id="CHEBI:57792"/>
    </ligand>
</feature>
<feature type="binding site" evidence="1">
    <location>
        <position position="197"/>
    </location>
    <ligand>
        <name>1-deoxy-D-xylulose 5-phosphate</name>
        <dbReference type="ChEBI" id="CHEBI:57792"/>
    </ligand>
</feature>
<feature type="binding site" evidence="1">
    <location>
        <position position="203"/>
    </location>
    <ligand>
        <name>NADPH</name>
        <dbReference type="ChEBI" id="CHEBI:57783"/>
    </ligand>
</feature>
<feature type="binding site" evidence="1">
    <location>
        <position position="210"/>
    </location>
    <ligand>
        <name>1-deoxy-D-xylulose 5-phosphate</name>
        <dbReference type="ChEBI" id="CHEBI:57792"/>
    </ligand>
</feature>
<feature type="binding site" evidence="1">
    <location>
        <position position="215"/>
    </location>
    <ligand>
        <name>1-deoxy-D-xylulose 5-phosphate</name>
        <dbReference type="ChEBI" id="CHEBI:57792"/>
    </ligand>
</feature>
<feature type="binding site" evidence="1">
    <location>
        <position position="216"/>
    </location>
    <ligand>
        <name>1-deoxy-D-xylulose 5-phosphate</name>
        <dbReference type="ChEBI" id="CHEBI:57792"/>
    </ligand>
</feature>
<feature type="binding site" evidence="1">
    <location>
        <position position="219"/>
    </location>
    <ligand>
        <name>1-deoxy-D-xylulose 5-phosphate</name>
        <dbReference type="ChEBI" id="CHEBI:57792"/>
    </ligand>
</feature>
<feature type="binding site" evidence="1">
    <location>
        <position position="219"/>
    </location>
    <ligand>
        <name>Mn(2+)</name>
        <dbReference type="ChEBI" id="CHEBI:29035"/>
    </ligand>
</feature>
<comment type="function">
    <text evidence="1">Catalyzes the NADPH-dependent rearrangement and reduction of 1-deoxy-D-xylulose-5-phosphate (DXP) to 2-C-methyl-D-erythritol 4-phosphate (MEP).</text>
</comment>
<comment type="catalytic activity">
    <reaction evidence="1">
        <text>2-C-methyl-D-erythritol 4-phosphate + NADP(+) = 1-deoxy-D-xylulose 5-phosphate + NADPH + H(+)</text>
        <dbReference type="Rhea" id="RHEA:13717"/>
        <dbReference type="ChEBI" id="CHEBI:15378"/>
        <dbReference type="ChEBI" id="CHEBI:57783"/>
        <dbReference type="ChEBI" id="CHEBI:57792"/>
        <dbReference type="ChEBI" id="CHEBI:58262"/>
        <dbReference type="ChEBI" id="CHEBI:58349"/>
        <dbReference type="EC" id="1.1.1.267"/>
    </reaction>
    <physiologicalReaction direction="right-to-left" evidence="1">
        <dbReference type="Rhea" id="RHEA:13719"/>
    </physiologicalReaction>
</comment>
<comment type="cofactor">
    <cofactor evidence="1">
        <name>Mg(2+)</name>
        <dbReference type="ChEBI" id="CHEBI:18420"/>
    </cofactor>
    <cofactor evidence="1">
        <name>Mn(2+)</name>
        <dbReference type="ChEBI" id="CHEBI:29035"/>
    </cofactor>
</comment>
<comment type="pathway">
    <text evidence="1">Isoprenoid biosynthesis; isopentenyl diphosphate biosynthesis via DXP pathway; isopentenyl diphosphate from 1-deoxy-D-xylulose 5-phosphate: step 1/6.</text>
</comment>
<comment type="similarity">
    <text evidence="1">Belongs to the DXR family.</text>
</comment>
<gene>
    <name evidence="1" type="primary">dxr</name>
    <name type="ordered locus">Clim_0085</name>
</gene>
<protein>
    <recommendedName>
        <fullName evidence="1">1-deoxy-D-xylulose 5-phosphate reductoisomerase</fullName>
        <shortName evidence="1">DXP reductoisomerase</shortName>
        <ecNumber evidence="1">1.1.1.267</ecNumber>
    </recommendedName>
    <alternativeName>
        <fullName evidence="1">1-deoxyxylulose-5-phosphate reductoisomerase</fullName>
    </alternativeName>
    <alternativeName>
        <fullName evidence="1">2-C-methyl-D-erythritol 4-phosphate synthase</fullName>
    </alternativeName>
</protein>
<name>DXR_CHLL2</name>
<keyword id="KW-0414">Isoprene biosynthesis</keyword>
<keyword id="KW-0464">Manganese</keyword>
<keyword id="KW-0479">Metal-binding</keyword>
<keyword id="KW-0521">NADP</keyword>
<keyword id="KW-0560">Oxidoreductase</keyword>
<reference key="1">
    <citation type="submission" date="2008-05" db="EMBL/GenBank/DDBJ databases">
        <title>Complete sequence of Chlorobium limicola DSM 245.</title>
        <authorList>
            <consortium name="US DOE Joint Genome Institute"/>
            <person name="Lucas S."/>
            <person name="Copeland A."/>
            <person name="Lapidus A."/>
            <person name="Glavina del Rio T."/>
            <person name="Dalin E."/>
            <person name="Tice H."/>
            <person name="Bruce D."/>
            <person name="Goodwin L."/>
            <person name="Pitluck S."/>
            <person name="Schmutz J."/>
            <person name="Larimer F."/>
            <person name="Land M."/>
            <person name="Hauser L."/>
            <person name="Kyrpides N."/>
            <person name="Ovchinnikova G."/>
            <person name="Zhao F."/>
            <person name="Li T."/>
            <person name="Liu Z."/>
            <person name="Overmann J."/>
            <person name="Bryant D.A."/>
            <person name="Richardson P."/>
        </authorList>
    </citation>
    <scope>NUCLEOTIDE SEQUENCE [LARGE SCALE GENOMIC DNA]</scope>
    <source>
        <strain>DSM 245 / NBRC 103803 / 6330</strain>
    </source>
</reference>
<evidence type="ECO:0000255" key="1">
    <source>
        <dbReference type="HAMAP-Rule" id="MF_00183"/>
    </source>
</evidence>
<proteinExistence type="inferred from homology"/>
<sequence>MKALSILGSTGSIGLSTLDVVRQHPGKFTITGLAEGHDVGLLNEQINEFRPDVVSVRDAASADQLRKLLGTHKPEIFYGIEGAATVAAAEGAEMVVSAIVGAAGLVPTVSAIKAGKHIALANKETLVVAGQLVSDLVKKHNVQLLPVDSEHSAIFQSLAGHRTEDIERIILTASGGPFRKTPAEELKLAGPEQALKHPQWTMGAKITIDSATLMNKGLEVIEAHWLFNMPAEKIGVVVHPQSIIHSMVEYIDGCVMAQMGVPDMRAPIAYALAWPERCGTGIGKLDLAKIGTLTFEEPDMERFPALRLAFDALKAGRTYPAVLNAANEIAVAAFLDKKIGFTDIADTVDKTMQAHEAYAPVELDEYLQADRWAREKAREIIG</sequence>